<proteinExistence type="inferred from homology"/>
<evidence type="ECO:0000250" key="1"/>
<evidence type="ECO:0000305" key="2"/>
<keyword id="KW-0028">Amino-acid biosynthesis</keyword>
<keyword id="KW-0032">Aminotransferase</keyword>
<keyword id="KW-0368">Histidine biosynthesis</keyword>
<keyword id="KW-0663">Pyridoxal phosphate</keyword>
<keyword id="KW-0808">Transferase</keyword>
<comment type="catalytic activity">
    <reaction>
        <text>L-histidinol phosphate + 2-oxoglutarate = 3-(imidazol-4-yl)-2-oxopropyl phosphate + L-glutamate</text>
        <dbReference type="Rhea" id="RHEA:23744"/>
        <dbReference type="ChEBI" id="CHEBI:16810"/>
        <dbReference type="ChEBI" id="CHEBI:29985"/>
        <dbReference type="ChEBI" id="CHEBI:57766"/>
        <dbReference type="ChEBI" id="CHEBI:57980"/>
        <dbReference type="EC" id="2.6.1.9"/>
    </reaction>
</comment>
<comment type="cofactor">
    <cofactor evidence="1">
        <name>pyridoxal 5'-phosphate</name>
        <dbReference type="ChEBI" id="CHEBI:597326"/>
    </cofactor>
</comment>
<comment type="pathway">
    <text>Amino-acid biosynthesis; L-histidine biosynthesis; L-histidine from 5-phospho-alpha-D-ribose 1-diphosphate: step 7/9.</text>
</comment>
<comment type="subunit">
    <text evidence="1">Homodimer.</text>
</comment>
<comment type="similarity">
    <text evidence="2">Belongs to the class-II pyridoxal-phosphate-dependent aminotransferase family. Histidinol-phosphate aminotransferase subfamily.</text>
</comment>
<organism>
    <name type="scientific">Methylobacillus flagellatus</name>
    <dbReference type="NCBI Taxonomy" id="405"/>
    <lineage>
        <taxon>Bacteria</taxon>
        <taxon>Pseudomonadati</taxon>
        <taxon>Pseudomonadota</taxon>
        <taxon>Betaproteobacteria</taxon>
        <taxon>Nitrosomonadales</taxon>
        <taxon>Methylophilaceae</taxon>
        <taxon>Methylobacillus</taxon>
    </lineage>
</organism>
<accession>O07131</accession>
<dbReference type="EC" id="2.6.1.9"/>
<dbReference type="EMBL" id="U83322">
    <property type="protein sequence ID" value="AAB58526.1"/>
    <property type="molecule type" value="Genomic_DNA"/>
</dbReference>
<dbReference type="SMR" id="O07131"/>
<dbReference type="UniPathway" id="UPA00031">
    <property type="reaction ID" value="UER00012"/>
</dbReference>
<dbReference type="GO" id="GO:0004400">
    <property type="term" value="F:histidinol-phosphate transaminase activity"/>
    <property type="evidence" value="ECO:0007669"/>
    <property type="project" value="UniProtKB-UniRule"/>
</dbReference>
<dbReference type="GO" id="GO:0030170">
    <property type="term" value="F:pyridoxal phosphate binding"/>
    <property type="evidence" value="ECO:0007669"/>
    <property type="project" value="InterPro"/>
</dbReference>
<dbReference type="GO" id="GO:0000105">
    <property type="term" value="P:L-histidine biosynthetic process"/>
    <property type="evidence" value="ECO:0007669"/>
    <property type="project" value="UniProtKB-UniRule"/>
</dbReference>
<dbReference type="CDD" id="cd00609">
    <property type="entry name" value="AAT_like"/>
    <property type="match status" value="1"/>
</dbReference>
<dbReference type="Gene3D" id="3.90.1150.10">
    <property type="entry name" value="Aspartate Aminotransferase, domain 1"/>
    <property type="match status" value="1"/>
</dbReference>
<dbReference type="Gene3D" id="3.40.640.10">
    <property type="entry name" value="Type I PLP-dependent aspartate aminotransferase-like (Major domain)"/>
    <property type="match status" value="1"/>
</dbReference>
<dbReference type="HAMAP" id="MF_01023">
    <property type="entry name" value="HisC_aminotrans_2"/>
    <property type="match status" value="1"/>
</dbReference>
<dbReference type="InterPro" id="IPR001917">
    <property type="entry name" value="Aminotrans_II_pyridoxalP_BS"/>
</dbReference>
<dbReference type="InterPro" id="IPR004839">
    <property type="entry name" value="Aminotransferase_I/II_large"/>
</dbReference>
<dbReference type="InterPro" id="IPR005861">
    <property type="entry name" value="HisP_aminotrans"/>
</dbReference>
<dbReference type="InterPro" id="IPR050106">
    <property type="entry name" value="HistidinolP_aminotransfase"/>
</dbReference>
<dbReference type="InterPro" id="IPR015424">
    <property type="entry name" value="PyrdxlP-dep_Trfase"/>
</dbReference>
<dbReference type="InterPro" id="IPR015421">
    <property type="entry name" value="PyrdxlP-dep_Trfase_major"/>
</dbReference>
<dbReference type="InterPro" id="IPR015422">
    <property type="entry name" value="PyrdxlP-dep_Trfase_small"/>
</dbReference>
<dbReference type="NCBIfam" id="TIGR01141">
    <property type="entry name" value="hisC"/>
    <property type="match status" value="1"/>
</dbReference>
<dbReference type="PANTHER" id="PTHR43643:SF3">
    <property type="entry name" value="HISTIDINOL-PHOSPHATE AMINOTRANSFERASE"/>
    <property type="match status" value="1"/>
</dbReference>
<dbReference type="PANTHER" id="PTHR43643">
    <property type="entry name" value="HISTIDINOL-PHOSPHATE AMINOTRANSFERASE 2"/>
    <property type="match status" value="1"/>
</dbReference>
<dbReference type="Pfam" id="PF00155">
    <property type="entry name" value="Aminotran_1_2"/>
    <property type="match status" value="1"/>
</dbReference>
<dbReference type="SUPFAM" id="SSF53383">
    <property type="entry name" value="PLP-dependent transferases"/>
    <property type="match status" value="1"/>
</dbReference>
<dbReference type="PROSITE" id="PS00599">
    <property type="entry name" value="AA_TRANSFER_CLASS_2"/>
    <property type="match status" value="1"/>
</dbReference>
<reference key="1">
    <citation type="journal article" date="1998" name="Mol. Gen. Genet.">
        <title>Refined genetic map of the obligate methylotroph Methylobacillus flagellatum.</title>
        <authorList>
            <person name="Serebrijski I."/>
            <person name="Gomelsky M."/>
            <person name="Bashkirova E."/>
            <person name="Chistoserdov A."/>
            <person name="Tsygankov Y.D."/>
        </authorList>
    </citation>
    <scope>NUCLEOTIDE SEQUENCE [GENOMIC DNA]</scope>
    <source>
        <strain>MFK1</strain>
    </source>
</reference>
<sequence>MTRLYDFAPSNIRAIAPYQPGKPITELAREMGLKPGVIIKLASNENPLGVSPKAYAAMQDALEDIARYPDGNSFALRDCVCRKFKLQPDQLVFGNGSNDILELAARAFLTPGTEAVYAQHAFAVYALVTQATGASGISVPARDFGHDLDAMLAAITDKTRLFIANPNNPTGTLLSKPALRDFLAKVPRQVLVVLDEAYDEYLAAELKSEAFSWLAEFDNLLISRTLSKAYGLAGLRVGFGVTSPGVADLMNRVRQPFNVNSVAQAAAVAALEDDEFVERSYALNQAGMQQLTEGLARLGLSYIPSYGNFVSFHVAQAAEVYQQLLKRGVIVRPVAAYDMPDYLRVSIGLHAENARFLEVLEQILKTRT</sequence>
<name>HIS8_METFL</name>
<gene>
    <name type="primary">hisC</name>
    <name type="synonym">hisH</name>
</gene>
<protein>
    <recommendedName>
        <fullName>Histidinol-phosphate aminotransferase</fullName>
        <ecNumber>2.6.1.9</ecNumber>
    </recommendedName>
    <alternativeName>
        <fullName>Imidazole acetol-phosphate transaminase</fullName>
    </alternativeName>
</protein>
<feature type="chain" id="PRO_0000153390" description="Histidinol-phosphate aminotransferase">
    <location>
        <begin position="1"/>
        <end position="368"/>
    </location>
</feature>
<feature type="modified residue" description="N6-(pyridoxal phosphate)lysine" evidence="1">
    <location>
        <position position="228"/>
    </location>
</feature>